<feature type="chain" id="PRO_0000185510" description="Ceramide synthase 2">
    <location>
        <begin position="1"/>
        <end position="380"/>
    </location>
</feature>
<feature type="topological domain" description="Lumenal" evidence="17">
    <location>
        <begin position="1"/>
        <end position="40"/>
    </location>
</feature>
<feature type="transmembrane region" description="Helical" evidence="2">
    <location>
        <begin position="41"/>
        <end position="61"/>
    </location>
</feature>
<feature type="transmembrane region" description="Helical" evidence="2">
    <location>
        <begin position="140"/>
        <end position="160"/>
    </location>
</feature>
<feature type="transmembrane region" description="Helical" evidence="2">
    <location>
        <begin position="175"/>
        <end position="195"/>
    </location>
</feature>
<feature type="transmembrane region" description="Helical" evidence="2">
    <location>
        <begin position="209"/>
        <end position="229"/>
    </location>
</feature>
<feature type="transmembrane region" description="Helical" evidence="2">
    <location>
        <begin position="264"/>
        <end position="284"/>
    </location>
</feature>
<feature type="transmembrane region" description="Helical" evidence="2">
    <location>
        <begin position="304"/>
        <end position="324"/>
    </location>
</feature>
<feature type="topological domain" description="Cytoplasmic" evidence="1">
    <location>
        <begin position="325"/>
        <end position="380"/>
    </location>
</feature>
<feature type="domain" description="TLC" evidence="3">
    <location>
        <begin position="131"/>
        <end position="332"/>
    </location>
</feature>
<feature type="region of interest" description="Homeobox-like" evidence="16">
    <location>
        <begin position="67"/>
        <end position="128"/>
    </location>
</feature>
<feature type="region of interest" description="Disordered" evidence="4">
    <location>
        <begin position="340"/>
        <end position="380"/>
    </location>
</feature>
<feature type="short sequence motif" description="Last loop motif" evidence="1">
    <location>
        <begin position="291"/>
        <end position="300"/>
    </location>
</feature>
<feature type="compositionally biased region" description="Acidic residues" evidence="4">
    <location>
        <begin position="344"/>
        <end position="353"/>
    </location>
</feature>
<feature type="modified residue" description="Phosphoserine" evidence="20">
    <location>
        <position position="341"/>
    </location>
</feature>
<feature type="modified residue" description="Phosphothreonine" evidence="20">
    <location>
        <position position="346"/>
    </location>
</feature>
<feature type="modified residue" description="Phosphoserine" evidence="20">
    <location>
        <position position="348"/>
    </location>
</feature>
<feature type="modified residue" description="Phosphoserine" evidence="20">
    <location>
        <position position="349"/>
    </location>
</feature>
<feature type="glycosylation site" description="N-linked (GlcNAc...) asparagine" evidence="5">
    <location>
        <position position="19"/>
    </location>
</feature>
<proteinExistence type="evidence at protein level"/>
<reference key="1">
    <citation type="submission" date="2001-04" db="EMBL/GenBank/DDBJ databases">
        <authorList>
            <person name="Hartmann E."/>
        </authorList>
    </citation>
    <scope>NUCLEOTIDE SEQUENCE [MRNA]</scope>
</reference>
<reference key="2">
    <citation type="journal article" date="2005" name="Science">
        <title>The transcriptional landscape of the mammalian genome.</title>
        <authorList>
            <person name="Carninci P."/>
            <person name="Kasukawa T."/>
            <person name="Katayama S."/>
            <person name="Gough J."/>
            <person name="Frith M.C."/>
            <person name="Maeda N."/>
            <person name="Oyama R."/>
            <person name="Ravasi T."/>
            <person name="Lenhard B."/>
            <person name="Wells C."/>
            <person name="Kodzius R."/>
            <person name="Shimokawa K."/>
            <person name="Bajic V.B."/>
            <person name="Brenner S.E."/>
            <person name="Batalov S."/>
            <person name="Forrest A.R."/>
            <person name="Zavolan M."/>
            <person name="Davis M.J."/>
            <person name="Wilming L.G."/>
            <person name="Aidinis V."/>
            <person name="Allen J.E."/>
            <person name="Ambesi-Impiombato A."/>
            <person name="Apweiler R."/>
            <person name="Aturaliya R.N."/>
            <person name="Bailey T.L."/>
            <person name="Bansal M."/>
            <person name="Baxter L."/>
            <person name="Beisel K.W."/>
            <person name="Bersano T."/>
            <person name="Bono H."/>
            <person name="Chalk A.M."/>
            <person name="Chiu K.P."/>
            <person name="Choudhary V."/>
            <person name="Christoffels A."/>
            <person name="Clutterbuck D.R."/>
            <person name="Crowe M.L."/>
            <person name="Dalla E."/>
            <person name="Dalrymple B.P."/>
            <person name="de Bono B."/>
            <person name="Della Gatta G."/>
            <person name="di Bernardo D."/>
            <person name="Down T."/>
            <person name="Engstrom P."/>
            <person name="Fagiolini M."/>
            <person name="Faulkner G."/>
            <person name="Fletcher C.F."/>
            <person name="Fukushima T."/>
            <person name="Furuno M."/>
            <person name="Futaki S."/>
            <person name="Gariboldi M."/>
            <person name="Georgii-Hemming P."/>
            <person name="Gingeras T.R."/>
            <person name="Gojobori T."/>
            <person name="Green R.E."/>
            <person name="Gustincich S."/>
            <person name="Harbers M."/>
            <person name="Hayashi Y."/>
            <person name="Hensch T.K."/>
            <person name="Hirokawa N."/>
            <person name="Hill D."/>
            <person name="Huminiecki L."/>
            <person name="Iacono M."/>
            <person name="Ikeo K."/>
            <person name="Iwama A."/>
            <person name="Ishikawa T."/>
            <person name="Jakt M."/>
            <person name="Kanapin A."/>
            <person name="Katoh M."/>
            <person name="Kawasawa Y."/>
            <person name="Kelso J."/>
            <person name="Kitamura H."/>
            <person name="Kitano H."/>
            <person name="Kollias G."/>
            <person name="Krishnan S.P."/>
            <person name="Kruger A."/>
            <person name="Kummerfeld S.K."/>
            <person name="Kurochkin I.V."/>
            <person name="Lareau L.F."/>
            <person name="Lazarevic D."/>
            <person name="Lipovich L."/>
            <person name="Liu J."/>
            <person name="Liuni S."/>
            <person name="McWilliam S."/>
            <person name="Madan Babu M."/>
            <person name="Madera M."/>
            <person name="Marchionni L."/>
            <person name="Matsuda H."/>
            <person name="Matsuzawa S."/>
            <person name="Miki H."/>
            <person name="Mignone F."/>
            <person name="Miyake S."/>
            <person name="Morris K."/>
            <person name="Mottagui-Tabar S."/>
            <person name="Mulder N."/>
            <person name="Nakano N."/>
            <person name="Nakauchi H."/>
            <person name="Ng P."/>
            <person name="Nilsson R."/>
            <person name="Nishiguchi S."/>
            <person name="Nishikawa S."/>
            <person name="Nori F."/>
            <person name="Ohara O."/>
            <person name="Okazaki Y."/>
            <person name="Orlando V."/>
            <person name="Pang K.C."/>
            <person name="Pavan W.J."/>
            <person name="Pavesi G."/>
            <person name="Pesole G."/>
            <person name="Petrovsky N."/>
            <person name="Piazza S."/>
            <person name="Reed J."/>
            <person name="Reid J.F."/>
            <person name="Ring B.Z."/>
            <person name="Ringwald M."/>
            <person name="Rost B."/>
            <person name="Ruan Y."/>
            <person name="Salzberg S.L."/>
            <person name="Sandelin A."/>
            <person name="Schneider C."/>
            <person name="Schoenbach C."/>
            <person name="Sekiguchi K."/>
            <person name="Semple C.A."/>
            <person name="Seno S."/>
            <person name="Sessa L."/>
            <person name="Sheng Y."/>
            <person name="Shibata Y."/>
            <person name="Shimada H."/>
            <person name="Shimada K."/>
            <person name="Silva D."/>
            <person name="Sinclair B."/>
            <person name="Sperling S."/>
            <person name="Stupka E."/>
            <person name="Sugiura K."/>
            <person name="Sultana R."/>
            <person name="Takenaka Y."/>
            <person name="Taki K."/>
            <person name="Tammoja K."/>
            <person name="Tan S.L."/>
            <person name="Tang S."/>
            <person name="Taylor M.S."/>
            <person name="Tegner J."/>
            <person name="Teichmann S.A."/>
            <person name="Ueda H.R."/>
            <person name="van Nimwegen E."/>
            <person name="Verardo R."/>
            <person name="Wei C.L."/>
            <person name="Yagi K."/>
            <person name="Yamanishi H."/>
            <person name="Zabarovsky E."/>
            <person name="Zhu S."/>
            <person name="Zimmer A."/>
            <person name="Hide W."/>
            <person name="Bult C."/>
            <person name="Grimmond S.M."/>
            <person name="Teasdale R.D."/>
            <person name="Liu E.T."/>
            <person name="Brusic V."/>
            <person name="Quackenbush J."/>
            <person name="Wahlestedt C."/>
            <person name="Mattick J.S."/>
            <person name="Hume D.A."/>
            <person name="Kai C."/>
            <person name="Sasaki D."/>
            <person name="Tomaru Y."/>
            <person name="Fukuda S."/>
            <person name="Kanamori-Katayama M."/>
            <person name="Suzuki M."/>
            <person name="Aoki J."/>
            <person name="Arakawa T."/>
            <person name="Iida J."/>
            <person name="Imamura K."/>
            <person name="Itoh M."/>
            <person name="Kato T."/>
            <person name="Kawaji H."/>
            <person name="Kawagashira N."/>
            <person name="Kawashima T."/>
            <person name="Kojima M."/>
            <person name="Kondo S."/>
            <person name="Konno H."/>
            <person name="Nakano K."/>
            <person name="Ninomiya N."/>
            <person name="Nishio T."/>
            <person name="Okada M."/>
            <person name="Plessy C."/>
            <person name="Shibata K."/>
            <person name="Shiraki T."/>
            <person name="Suzuki S."/>
            <person name="Tagami M."/>
            <person name="Waki K."/>
            <person name="Watahiki A."/>
            <person name="Okamura-Oho Y."/>
            <person name="Suzuki H."/>
            <person name="Kawai J."/>
            <person name="Hayashizaki Y."/>
        </authorList>
    </citation>
    <scope>NUCLEOTIDE SEQUENCE [LARGE SCALE MRNA]</scope>
    <source>
        <strain>C57BL/6J</strain>
        <tissue>Liver</tissue>
    </source>
</reference>
<reference key="3">
    <citation type="journal article" date="2004" name="Genome Res.">
        <title>The status, quality, and expansion of the NIH full-length cDNA project: the Mammalian Gene Collection (MGC).</title>
        <authorList>
            <consortium name="The MGC Project Team"/>
        </authorList>
    </citation>
    <scope>NUCLEOTIDE SEQUENCE [LARGE SCALE MRNA]</scope>
    <source>
        <tissue>Mammary gland</tissue>
    </source>
</reference>
<reference key="4">
    <citation type="journal article" date="2005" name="Biochem. J.">
        <title>Mammalian Lass6 and its related family members regulate synthesis of specific ceramides.</title>
        <authorList>
            <person name="Mizutani Y."/>
            <person name="Kihara A."/>
            <person name="Igarashi Y."/>
        </authorList>
    </citation>
    <scope>FUNCTION</scope>
    <scope>CATALYTIC ACTIVITY</scope>
    <scope>PATHWAY</scope>
    <scope>GLYCOSYLATION AT ASN-19</scope>
    <scope>TISSUE SPECIFICITY</scope>
    <scope>SUBCELLULAR LOCATION</scope>
    <scope>DOMAIN</scope>
</reference>
<reference key="5">
    <citation type="journal article" date="2008" name="J. Biol. Chem.">
        <title>Characterization of ceramide synthase 2: tissue distribution, substrate specificity, and inhibition by sphingosine 1-phosphate.</title>
        <authorList>
            <person name="Laviad E.L."/>
            <person name="Albee L."/>
            <person name="Pankova-Kholmyansky I."/>
            <person name="Epstein S."/>
            <person name="Park H."/>
            <person name="Merrill A.H. Jr."/>
            <person name="Futerman A.H."/>
        </authorList>
    </citation>
    <scope>FUNCTION</scope>
    <scope>CATALYTIC ACTIVITY</scope>
    <scope>PATHWAY</scope>
    <scope>TISSUE SPECIFICITY</scope>
</reference>
<reference key="6">
    <citation type="journal article" date="2009" name="J. Biol. Chem.">
        <title>Adult ceramide synthase 2 (CERS2)-deficient mice exhibit myelin sheath defects, cerebellar degeneration, and hepatocarcinomas.</title>
        <authorList>
            <person name="Imgrund S."/>
            <person name="Hartmann D."/>
            <person name="Farwanah H."/>
            <person name="Eckhardt M."/>
            <person name="Sandhoff R."/>
            <person name="Degen J."/>
            <person name="Gieselmann V."/>
            <person name="Sandhoff K."/>
            <person name="Willecke K."/>
        </authorList>
    </citation>
    <scope>FUNCTION</scope>
    <scope>CATALYTIC ACTIVITY</scope>
    <scope>TISSUE SPECIFICITY</scope>
    <scope>DISRUPTION PHENOTYPE</scope>
</reference>
<reference key="7">
    <citation type="journal article" date="2010" name="Cell">
        <title>A tissue-specific atlas of mouse protein phosphorylation and expression.</title>
        <authorList>
            <person name="Huttlin E.L."/>
            <person name="Jedrychowski M.P."/>
            <person name="Elias J.E."/>
            <person name="Goswami T."/>
            <person name="Rad R."/>
            <person name="Beausoleil S.A."/>
            <person name="Villen J."/>
            <person name="Haas W."/>
            <person name="Sowa M.E."/>
            <person name="Gygi S.P."/>
        </authorList>
    </citation>
    <scope>PHOSPHORYLATION [LARGE SCALE ANALYSIS] AT SER-341; THR-346; SER-348 AND SER-349</scope>
    <scope>IDENTIFICATION BY MASS SPECTROMETRY [LARGE SCALE ANALYSIS]</scope>
    <source>
        <tissue>Brain</tissue>
        <tissue>Brown adipose tissue</tissue>
        <tissue>Kidney</tissue>
        <tissue>Liver</tissue>
        <tissue>Lung</tissue>
        <tissue>Spleen</tissue>
        <tissue>Testis</tissue>
    </source>
</reference>
<reference key="8">
    <citation type="journal article" date="2010" name="J. Biol. Chem.">
        <title>A critical role for ceramide synthase 2 in liver homeostasis: I. alterations in lipid metabolic pathways.</title>
        <authorList>
            <person name="Pewzner-Jung Y."/>
            <person name="Park H."/>
            <person name="Laviad E.L."/>
            <person name="Silva L.C."/>
            <person name="Lahiri S."/>
            <person name="Stiban J."/>
            <person name="Erez-Roman R."/>
            <person name="Bruegger B."/>
            <person name="Sachsenheimer T."/>
            <person name="Wieland F."/>
            <person name="Prieto M."/>
            <person name="Merrill A.H. Jr."/>
            <person name="Futerman A.H."/>
        </authorList>
    </citation>
    <scope>FUNCTION</scope>
    <scope>CATALYTIC ACTIVITY</scope>
    <scope>PATHWAY</scope>
    <scope>DISRUPTION PHENOTYPE</scope>
</reference>
<reference key="9">
    <citation type="journal article" date="2013" name="J. Biol. Chem.">
        <title>Fam57b (family with sequence similarity 57, member B), a novel peroxisome proliferator-activated receptor gamma target gene that regulates adipogenesis through ceramide synthesis.</title>
        <authorList>
            <person name="Yamashita-Sugahara Y."/>
            <person name="Tokuzawa Y."/>
            <person name="Nakachi Y."/>
            <person name="Kanesaki-Yatsuka Y."/>
            <person name="Matsumoto M."/>
            <person name="Mizuno Y."/>
            <person name="Okazaki Y."/>
        </authorList>
    </citation>
    <scope>FUNCTION</scope>
    <scope>CATALYTIC ACTIVITY</scope>
    <scope>PATHWAY</scope>
</reference>
<reference key="10">
    <citation type="journal article" date="2016" name="J. Biol. Chem.">
        <title>SIRT3 deacetylates ceramide synthases: Implications for mitochondrial dysfunction and brain injury.</title>
        <authorList>
            <person name="Novgorodov S.A."/>
            <person name="Riley C.L."/>
            <person name="Keffler J.A."/>
            <person name="Yu J."/>
            <person name="Kindy M.S."/>
            <person name="Macklin W.B."/>
            <person name="Lombard D.B."/>
            <person name="Gudz T.I."/>
        </authorList>
    </citation>
    <scope>ACETYLATION</scope>
    <scope>DEACETYLATION BY SIRT3</scope>
</reference>
<reference key="11">
    <citation type="journal article" date="2020" name="Biochem. Biophys. Res. Commun.">
        <title>LASS2 regulates hepatocyte steatosis by interacting with NDUFS2/OXPHOS related proteins.</title>
        <authorList>
            <person name="Yang Y."/>
            <person name="Yang X."/>
            <person name="Lin Y."/>
            <person name="Yang G."/>
            <person name="Li L."/>
        </authorList>
    </citation>
    <scope>FUNCTION</scope>
    <scope>INTERACTION WITH NDUFS2</scope>
</reference>
<reference key="12">
    <citation type="journal article" date="2024" name="Nat. Metab.">
        <title>PAQR4 regulates adipocyte function and systemic metabolic health by mediating ceramide levels.</title>
        <authorList>
            <person name="Zhu Q."/>
            <person name="Chen S."/>
            <person name="Funcke J.B."/>
            <person name="Straub L.G."/>
            <person name="Lin Q."/>
            <person name="Zhao S."/>
            <person name="Joung C."/>
            <person name="Zhang Z."/>
            <person name="Kim D.S."/>
            <person name="Li N."/>
            <person name="Gliniak C.M."/>
            <person name="Lee C."/>
            <person name="Cebrian-Serrano A."/>
            <person name="Pedersen L."/>
            <person name="Halberg N."/>
            <person name="Gordillo R."/>
            <person name="Kusminski C.M."/>
            <person name="Scherer P.E."/>
        </authorList>
    </citation>
    <scope>FUNCTION</scope>
    <scope>CATALYTIC ACTIVITY</scope>
    <scope>INTERACTION WITH PAQR4</scope>
</reference>
<dbReference type="EC" id="2.3.1.24" evidence="9"/>
<dbReference type="EC" id="2.3.1.297" evidence="5 6 8"/>
<dbReference type="EMBL" id="AY029532">
    <property type="protein sequence ID" value="AAK40300.1"/>
    <property type="molecule type" value="mRNA"/>
</dbReference>
<dbReference type="EMBL" id="AK050161">
    <property type="protein sequence ID" value="BAC34102.1"/>
    <property type="molecule type" value="mRNA"/>
</dbReference>
<dbReference type="EMBL" id="AK159325">
    <property type="protein sequence ID" value="BAE34991.1"/>
    <property type="molecule type" value="mRNA"/>
</dbReference>
<dbReference type="EMBL" id="BC006847">
    <property type="protein sequence ID" value="AAH06847.2"/>
    <property type="molecule type" value="mRNA"/>
</dbReference>
<dbReference type="CCDS" id="CCDS17612.1"/>
<dbReference type="RefSeq" id="NP_001307421.1">
    <property type="nucleotide sequence ID" value="NM_001320492.1"/>
</dbReference>
<dbReference type="RefSeq" id="NP_084065.1">
    <property type="nucleotide sequence ID" value="NM_029789.2"/>
</dbReference>
<dbReference type="RefSeq" id="XP_006502323.1">
    <property type="nucleotide sequence ID" value="XM_006502260.3"/>
</dbReference>
<dbReference type="RefSeq" id="XP_030108738.1">
    <property type="nucleotide sequence ID" value="XM_030252878.1"/>
</dbReference>
<dbReference type="SMR" id="Q924Z4"/>
<dbReference type="BioGRID" id="218381">
    <property type="interactions" value="52"/>
</dbReference>
<dbReference type="FunCoup" id="Q924Z4">
    <property type="interactions" value="1185"/>
</dbReference>
<dbReference type="IntAct" id="Q924Z4">
    <property type="interactions" value="31"/>
</dbReference>
<dbReference type="STRING" id="10090.ENSMUSP00000015858"/>
<dbReference type="BindingDB" id="Q924Z4"/>
<dbReference type="ChEMBL" id="CHEMBL5291518"/>
<dbReference type="SwissLipids" id="SLP:000000116"/>
<dbReference type="GlyConnect" id="2203">
    <property type="glycosylation" value="2 N-Linked glycans (1 site)"/>
</dbReference>
<dbReference type="GlyCosmos" id="Q924Z4">
    <property type="glycosylation" value="1 site, 2 glycans"/>
</dbReference>
<dbReference type="GlyGen" id="Q924Z4">
    <property type="glycosylation" value="2 sites, 3 N-linked glycans (1 site), 1 O-linked glycan (1 site)"/>
</dbReference>
<dbReference type="iPTMnet" id="Q924Z4"/>
<dbReference type="PhosphoSitePlus" id="Q924Z4"/>
<dbReference type="SwissPalm" id="Q924Z4"/>
<dbReference type="jPOST" id="Q924Z4"/>
<dbReference type="PaxDb" id="10090-ENSMUSP00000015858"/>
<dbReference type="PeptideAtlas" id="Q924Z4"/>
<dbReference type="ProteomicsDB" id="281383"/>
<dbReference type="Pumba" id="Q924Z4"/>
<dbReference type="Antibodypedia" id="20302">
    <property type="antibodies" value="234 antibodies from 29 providers"/>
</dbReference>
<dbReference type="DNASU" id="76893"/>
<dbReference type="Ensembl" id="ENSMUST00000015858.12">
    <property type="protein sequence ID" value="ENSMUSP00000015858.5"/>
    <property type="gene ID" value="ENSMUSG00000015714.12"/>
</dbReference>
<dbReference type="GeneID" id="76893"/>
<dbReference type="KEGG" id="mmu:76893"/>
<dbReference type="UCSC" id="uc008qjj.1">
    <property type="organism name" value="mouse"/>
</dbReference>
<dbReference type="AGR" id="MGI:1924143"/>
<dbReference type="CTD" id="29956"/>
<dbReference type="MGI" id="MGI:1924143">
    <property type="gene designation" value="Cers2"/>
</dbReference>
<dbReference type="VEuPathDB" id="HostDB:ENSMUSG00000015714"/>
<dbReference type="eggNOG" id="KOG1607">
    <property type="taxonomic scope" value="Eukaryota"/>
</dbReference>
<dbReference type="GeneTree" id="ENSGT01030000234515"/>
<dbReference type="InParanoid" id="Q924Z4"/>
<dbReference type="OMA" id="IFAKRCI"/>
<dbReference type="OrthoDB" id="537032at2759"/>
<dbReference type="PhylomeDB" id="Q924Z4"/>
<dbReference type="TreeFam" id="TF314319"/>
<dbReference type="BRENDA" id="2.3.1.24">
    <property type="organism ID" value="3474"/>
</dbReference>
<dbReference type="BRENDA" id="2.3.1.297">
    <property type="organism ID" value="3474"/>
</dbReference>
<dbReference type="Reactome" id="R-MMU-1660661">
    <property type="pathway name" value="Sphingolipid de novo biosynthesis"/>
</dbReference>
<dbReference type="UniPathway" id="UPA00222"/>
<dbReference type="BioGRID-ORCS" id="76893">
    <property type="hits" value="12 hits in 65 CRISPR screens"/>
</dbReference>
<dbReference type="ChiTaRS" id="Cers2">
    <property type="organism name" value="mouse"/>
</dbReference>
<dbReference type="PRO" id="PR:Q924Z4"/>
<dbReference type="Proteomes" id="UP000000589">
    <property type="component" value="Chromosome 3"/>
</dbReference>
<dbReference type="RNAct" id="Q924Z4">
    <property type="molecule type" value="protein"/>
</dbReference>
<dbReference type="Bgee" id="ENSMUSG00000015714">
    <property type="expression patterns" value="Expressed in right kidney and 266 other cell types or tissues"/>
</dbReference>
<dbReference type="ExpressionAtlas" id="Q924Z4">
    <property type="expression patterns" value="baseline and differential"/>
</dbReference>
<dbReference type="GO" id="GO:0005783">
    <property type="term" value="C:endoplasmic reticulum"/>
    <property type="evidence" value="ECO:0000250"/>
    <property type="project" value="UniProtKB"/>
</dbReference>
<dbReference type="GO" id="GO:0005789">
    <property type="term" value="C:endoplasmic reticulum membrane"/>
    <property type="evidence" value="ECO:0007669"/>
    <property type="project" value="UniProtKB-SubCell"/>
</dbReference>
<dbReference type="GO" id="GO:0003677">
    <property type="term" value="F:DNA binding"/>
    <property type="evidence" value="ECO:0007669"/>
    <property type="project" value="InterPro"/>
</dbReference>
<dbReference type="GO" id="GO:0016410">
    <property type="term" value="F:N-acyltransferase activity"/>
    <property type="evidence" value="ECO:0000315"/>
    <property type="project" value="UniProtKB"/>
</dbReference>
<dbReference type="GO" id="GO:0050291">
    <property type="term" value="F:sphingosine N-acyltransferase activity"/>
    <property type="evidence" value="ECO:0000314"/>
    <property type="project" value="UniProtKB"/>
</dbReference>
<dbReference type="GO" id="GO:0046513">
    <property type="term" value="P:ceramide biosynthetic process"/>
    <property type="evidence" value="ECO:0000314"/>
    <property type="project" value="UniProtKB"/>
</dbReference>
<dbReference type="GO" id="GO:0048681">
    <property type="term" value="P:negative regulation of axon regeneration"/>
    <property type="evidence" value="ECO:0007669"/>
    <property type="project" value="Ensembl"/>
</dbReference>
<dbReference type="GO" id="GO:1900148">
    <property type="term" value="P:negative regulation of Schwann cell migration"/>
    <property type="evidence" value="ECO:0007669"/>
    <property type="project" value="Ensembl"/>
</dbReference>
<dbReference type="GO" id="GO:1905045">
    <property type="term" value="P:negative regulation of Schwann cell proliferation involved in axon regeneration"/>
    <property type="evidence" value="ECO:0007669"/>
    <property type="project" value="Ensembl"/>
</dbReference>
<dbReference type="GO" id="GO:0019216">
    <property type="term" value="P:regulation of lipid metabolic process"/>
    <property type="evidence" value="ECO:0000315"/>
    <property type="project" value="UniProtKB"/>
</dbReference>
<dbReference type="GO" id="GO:0035902">
    <property type="term" value="P:response to immobilization stress"/>
    <property type="evidence" value="ECO:0007669"/>
    <property type="project" value="Ensembl"/>
</dbReference>
<dbReference type="GO" id="GO:0030148">
    <property type="term" value="P:sphingolipid biosynthetic process"/>
    <property type="evidence" value="ECO:0000314"/>
    <property type="project" value="MGI"/>
</dbReference>
<dbReference type="CDD" id="cd00086">
    <property type="entry name" value="homeodomain"/>
    <property type="match status" value="1"/>
</dbReference>
<dbReference type="FunFam" id="1.10.10.60:FF:000020">
    <property type="entry name" value="Ceramide synthase 5"/>
    <property type="match status" value="1"/>
</dbReference>
<dbReference type="Gene3D" id="1.10.10.60">
    <property type="entry name" value="Homeodomain-like"/>
    <property type="match status" value="1"/>
</dbReference>
<dbReference type="InterPro" id="IPR001356">
    <property type="entry name" value="HD"/>
</dbReference>
<dbReference type="InterPro" id="IPR009057">
    <property type="entry name" value="Homeodomain-like_sf"/>
</dbReference>
<dbReference type="InterPro" id="IPR016439">
    <property type="entry name" value="Lag1/Lac1-like"/>
</dbReference>
<dbReference type="InterPro" id="IPR006634">
    <property type="entry name" value="TLC-dom"/>
</dbReference>
<dbReference type="PANTHER" id="PTHR12560:SF7">
    <property type="entry name" value="CERAMIDE SYNTHASE 2"/>
    <property type="match status" value="1"/>
</dbReference>
<dbReference type="PANTHER" id="PTHR12560">
    <property type="entry name" value="LONGEVITY ASSURANCE FACTOR 1 LAG1"/>
    <property type="match status" value="1"/>
</dbReference>
<dbReference type="Pfam" id="PF00046">
    <property type="entry name" value="Homeodomain"/>
    <property type="match status" value="1"/>
</dbReference>
<dbReference type="Pfam" id="PF03798">
    <property type="entry name" value="TRAM_LAG1_CLN8"/>
    <property type="match status" value="1"/>
</dbReference>
<dbReference type="PIRSF" id="PIRSF005225">
    <property type="entry name" value="LAG1_LAC1"/>
    <property type="match status" value="1"/>
</dbReference>
<dbReference type="SMART" id="SM00724">
    <property type="entry name" value="TLC"/>
    <property type="match status" value="1"/>
</dbReference>
<dbReference type="SUPFAM" id="SSF46689">
    <property type="entry name" value="Homeodomain-like"/>
    <property type="match status" value="1"/>
</dbReference>
<dbReference type="PROSITE" id="PS50922">
    <property type="entry name" value="TLC"/>
    <property type="match status" value="1"/>
</dbReference>
<keyword id="KW-0007">Acetylation</keyword>
<keyword id="KW-0256">Endoplasmic reticulum</keyword>
<keyword id="KW-0325">Glycoprotein</keyword>
<keyword id="KW-0444">Lipid biosynthesis</keyword>
<keyword id="KW-0443">Lipid metabolism</keyword>
<keyword id="KW-0472">Membrane</keyword>
<keyword id="KW-0597">Phosphoprotein</keyword>
<keyword id="KW-1185">Reference proteome</keyword>
<keyword id="KW-0808">Transferase</keyword>
<keyword id="KW-0812">Transmembrane</keyword>
<keyword id="KW-1133">Transmembrane helix</keyword>
<comment type="function">
    <text evidence="5 6 7 8 9 11 12">Ceramide synthase that catalyzes the transfer of the acyl chain from acyl-CoA to a sphingoid base, with high selectivity toward very-long-chain fatty acyl-CoA (chain length C22-C27) (PubMed:15823095, PubMed:18165233, PubMed:20110363, PubMed:23275342, PubMed:38961186). N-acylates sphinganine and sphingosine bases to form dihydroceramides and ceramides in de novo synthesis and salvage pathways, respectively (PubMed:15823095, PubMed:18165233, PubMed:20110363, PubMed:23275342). Plays a non-redundant role in the synthesis of ceramides with very-long-chain fatty acids in kidney, liver and brain. Regulates the abundance of myelin-specific sphingolipids galactosylceramide and sulfatide that affects myelin sheath architecture and motor neuron functions (PubMed:19801672, PubMed:32279995).</text>
</comment>
<comment type="catalytic activity">
    <reaction evidence="5 6 8">
        <text>a very long-chain fatty acyl-CoA + a sphingoid base = an N-(very-long-chain fatty acyl)-sphingoid base + CoA + H(+)</text>
        <dbReference type="Rhea" id="RHEA:61480"/>
        <dbReference type="ChEBI" id="CHEBI:15378"/>
        <dbReference type="ChEBI" id="CHEBI:57287"/>
        <dbReference type="ChEBI" id="CHEBI:84410"/>
        <dbReference type="ChEBI" id="CHEBI:138261"/>
        <dbReference type="ChEBI" id="CHEBI:144712"/>
        <dbReference type="EC" id="2.3.1.297"/>
    </reaction>
    <physiologicalReaction direction="left-to-right" evidence="5 6 8">
        <dbReference type="Rhea" id="RHEA:61481"/>
    </physiologicalReaction>
</comment>
<comment type="catalytic activity">
    <reaction evidence="5 7 8">
        <text>docosanoyl-CoA + sphinganine = N-docosanoylsphinganine + CoA + H(+)</text>
        <dbReference type="Rhea" id="RHEA:36535"/>
        <dbReference type="ChEBI" id="CHEBI:15378"/>
        <dbReference type="ChEBI" id="CHEBI:57287"/>
        <dbReference type="ChEBI" id="CHEBI:57817"/>
        <dbReference type="ChEBI" id="CHEBI:65059"/>
        <dbReference type="ChEBI" id="CHEBI:67021"/>
    </reaction>
    <physiologicalReaction direction="left-to-right" evidence="5 7 8">
        <dbReference type="Rhea" id="RHEA:36536"/>
    </physiologicalReaction>
</comment>
<comment type="catalytic activity">
    <reaction evidence="5 8">
        <text>tetracosanoyl-CoA + sphinganine = N-tetracosanoylsphinganine + CoA + H(+)</text>
        <dbReference type="Rhea" id="RHEA:33591"/>
        <dbReference type="ChEBI" id="CHEBI:15378"/>
        <dbReference type="ChEBI" id="CHEBI:52961"/>
        <dbReference type="ChEBI" id="CHEBI:57287"/>
        <dbReference type="ChEBI" id="CHEBI:57817"/>
        <dbReference type="ChEBI" id="CHEBI:65052"/>
    </reaction>
    <physiologicalReaction direction="left-to-right" evidence="5 8">
        <dbReference type="Rhea" id="RHEA:33592"/>
    </physiologicalReaction>
</comment>
<comment type="catalytic activity">
    <reaction evidence="5 6 8">
        <text>hexacosanoyl-CoA + sphinganine = N-hexacosanoylsphinganine + CoA + H(+)</text>
        <dbReference type="Rhea" id="RHEA:33351"/>
        <dbReference type="ChEBI" id="CHEBI:15378"/>
        <dbReference type="ChEBI" id="CHEBI:52962"/>
        <dbReference type="ChEBI" id="CHEBI:57287"/>
        <dbReference type="ChEBI" id="CHEBI:57817"/>
        <dbReference type="ChEBI" id="CHEBI:64868"/>
    </reaction>
    <physiologicalReaction direction="left-to-right" evidence="5 6 8">
        <dbReference type="Rhea" id="RHEA:33352"/>
    </physiologicalReaction>
</comment>
<comment type="catalytic activity">
    <reaction evidence="7">
        <text>(15Z)-tetracosenoyl-CoA + sphinganine = N-(15Z-tetracosenoyl)-sphinganine + CoA + H(+)</text>
        <dbReference type="Rhea" id="RHEA:36667"/>
        <dbReference type="ChEBI" id="CHEBI:15378"/>
        <dbReference type="ChEBI" id="CHEBI:57287"/>
        <dbReference type="ChEBI" id="CHEBI:57817"/>
        <dbReference type="ChEBI" id="CHEBI:74128"/>
        <dbReference type="ChEBI" id="CHEBI:74130"/>
    </reaction>
    <physiologicalReaction direction="left-to-right" evidence="7">
        <dbReference type="Rhea" id="RHEA:36668"/>
    </physiologicalReaction>
</comment>
<comment type="catalytic activity">
    <reaction evidence="1">
        <text>2-hydroxytetracosanoyl-CoA + sphinganine = N-(2-hydroxytetracosanoyl)-sphinganine + CoA + H(+)</text>
        <dbReference type="Rhea" id="RHEA:36627"/>
        <dbReference type="ChEBI" id="CHEBI:15378"/>
        <dbReference type="ChEBI" id="CHEBI:52371"/>
        <dbReference type="ChEBI" id="CHEBI:57287"/>
        <dbReference type="ChEBI" id="CHEBI:57817"/>
        <dbReference type="ChEBI" id="CHEBI:74118"/>
    </reaction>
    <physiologicalReaction direction="left-to-right" evidence="1">
        <dbReference type="Rhea" id="RHEA:36628"/>
    </physiologicalReaction>
</comment>
<comment type="catalytic activity">
    <reaction evidence="1">
        <text>2-hydroxydocosanoyl-CoA + sphinganine = N-(2-hydroxydocosanoyl)-sphinganine + CoA + H(+)</text>
        <dbReference type="Rhea" id="RHEA:36619"/>
        <dbReference type="ChEBI" id="CHEBI:15378"/>
        <dbReference type="ChEBI" id="CHEBI:57287"/>
        <dbReference type="ChEBI" id="CHEBI:57817"/>
        <dbReference type="ChEBI" id="CHEBI:67023"/>
        <dbReference type="ChEBI" id="CHEBI:74117"/>
    </reaction>
    <physiologicalReaction direction="left-to-right" evidence="1">
        <dbReference type="Rhea" id="RHEA:36620"/>
    </physiologicalReaction>
</comment>
<comment type="catalytic activity">
    <reaction evidence="1">
        <text>2-hydroxytetracosenoyl-CoA + sphinganine = N-(2-hydroxytetracosenoyl)-sphinganine + CoA + H(+)</text>
        <dbReference type="Rhea" id="RHEA:36767"/>
        <dbReference type="ChEBI" id="CHEBI:15378"/>
        <dbReference type="ChEBI" id="CHEBI:57287"/>
        <dbReference type="ChEBI" id="CHEBI:57817"/>
        <dbReference type="ChEBI" id="CHEBI:74215"/>
        <dbReference type="ChEBI" id="CHEBI:74216"/>
    </reaction>
    <physiologicalReaction direction="left-to-right" evidence="1">
        <dbReference type="Rhea" id="RHEA:36768"/>
    </physiologicalReaction>
</comment>
<comment type="catalytic activity">
    <reaction evidence="8">
        <text>tetracosenoyl-CoA + sphinganine = an N-tetracosenoylsphinganine + CoA + H(+)</text>
        <dbReference type="Rhea" id="RHEA:36715"/>
        <dbReference type="ChEBI" id="CHEBI:15378"/>
        <dbReference type="ChEBI" id="CHEBI:57287"/>
        <dbReference type="ChEBI" id="CHEBI:57817"/>
        <dbReference type="ChEBI" id="CHEBI:74146"/>
        <dbReference type="ChEBI" id="CHEBI:74160"/>
    </reaction>
    <physiologicalReaction direction="left-to-right" evidence="8">
        <dbReference type="Rhea" id="RHEA:36716"/>
    </physiologicalReaction>
</comment>
<comment type="catalytic activity">
    <reaction evidence="1">
        <text>hexacosenoyl-CoA + sphinganine = N-hexacosenoylsphinganine + CoA + H(+)</text>
        <dbReference type="Rhea" id="RHEA:36719"/>
        <dbReference type="ChEBI" id="CHEBI:15378"/>
        <dbReference type="ChEBI" id="CHEBI:57287"/>
        <dbReference type="ChEBI" id="CHEBI:57817"/>
        <dbReference type="ChEBI" id="CHEBI:74161"/>
        <dbReference type="ChEBI" id="CHEBI:74162"/>
    </reaction>
    <physiologicalReaction direction="left-to-right" evidence="1">
        <dbReference type="Rhea" id="RHEA:36720"/>
    </physiologicalReaction>
</comment>
<comment type="catalytic activity">
    <reaction evidence="1">
        <text>tetracosanoyl-CoA + sphing-4-enine = N-tetracosanoyl-sphing-4-enine + CoA + H(+)</text>
        <dbReference type="Rhea" id="RHEA:37115"/>
        <dbReference type="ChEBI" id="CHEBI:15378"/>
        <dbReference type="ChEBI" id="CHEBI:57287"/>
        <dbReference type="ChEBI" id="CHEBI:57756"/>
        <dbReference type="ChEBI" id="CHEBI:65052"/>
        <dbReference type="ChEBI" id="CHEBI:72965"/>
    </reaction>
    <physiologicalReaction direction="left-to-right" evidence="1">
        <dbReference type="Rhea" id="RHEA:37116"/>
    </physiologicalReaction>
</comment>
<comment type="catalytic activity">
    <reaction evidence="12">
        <text>tetracosenoyl-CoA + sphing-4-enine = N-(tetracosenoyl)-sphing-4-enine + CoA + H(+)</text>
        <dbReference type="Rhea" id="RHEA:37123"/>
        <dbReference type="ChEBI" id="CHEBI:15378"/>
        <dbReference type="ChEBI" id="CHEBI:57287"/>
        <dbReference type="ChEBI" id="CHEBI:57756"/>
        <dbReference type="ChEBI" id="CHEBI:74146"/>
        <dbReference type="ChEBI" id="CHEBI:74457"/>
    </reaction>
    <physiologicalReaction direction="left-to-right" evidence="18">
        <dbReference type="Rhea" id="RHEA:37124"/>
    </physiologicalReaction>
</comment>
<comment type="catalytic activity">
    <reaction evidence="1">
        <text>heptadecasphing-4-enine + tetracosanoyl-CoA = N-tetracosanoyl-heptadecasphing-4-enine + CoA + H(+)</text>
        <dbReference type="Rhea" id="RHEA:36739"/>
        <dbReference type="ChEBI" id="CHEBI:15378"/>
        <dbReference type="ChEBI" id="CHEBI:57287"/>
        <dbReference type="ChEBI" id="CHEBI:65052"/>
        <dbReference type="ChEBI" id="CHEBI:74166"/>
        <dbReference type="ChEBI" id="CHEBI:74167"/>
    </reaction>
    <physiologicalReaction direction="left-to-right" evidence="1">
        <dbReference type="Rhea" id="RHEA:36740"/>
    </physiologicalReaction>
</comment>
<comment type="catalytic activity">
    <reaction evidence="9">
        <text>a fatty acyl-CoA + sphing-4-enine = an N-acylsphing-4-enine + CoA + H(+)</text>
        <dbReference type="Rhea" id="RHEA:23768"/>
        <dbReference type="ChEBI" id="CHEBI:15378"/>
        <dbReference type="ChEBI" id="CHEBI:52639"/>
        <dbReference type="ChEBI" id="CHEBI:57287"/>
        <dbReference type="ChEBI" id="CHEBI:57756"/>
        <dbReference type="ChEBI" id="CHEBI:77636"/>
        <dbReference type="EC" id="2.3.1.24"/>
    </reaction>
    <physiologicalReaction direction="left-to-right" evidence="9">
        <dbReference type="Rhea" id="RHEA:23769"/>
    </physiologicalReaction>
</comment>
<comment type="catalytic activity">
    <reaction evidence="9 12">
        <text>sphing-4-enine + hexadecanoyl-CoA = N-hexadecanoylsphing-4-enine + CoA + H(+)</text>
        <dbReference type="Rhea" id="RHEA:36687"/>
        <dbReference type="ChEBI" id="CHEBI:15378"/>
        <dbReference type="ChEBI" id="CHEBI:57287"/>
        <dbReference type="ChEBI" id="CHEBI:57379"/>
        <dbReference type="ChEBI" id="CHEBI:57756"/>
        <dbReference type="ChEBI" id="CHEBI:72959"/>
    </reaction>
    <physiologicalReaction direction="left-to-right" evidence="9 18">
        <dbReference type="Rhea" id="RHEA:36688"/>
    </physiologicalReaction>
</comment>
<comment type="catalytic activity">
    <reaction evidence="9">
        <text>sphing-4-enine + octadecanoyl-CoA = N-octadecanoylsphing-4-enine + CoA + H(+)</text>
        <dbReference type="Rhea" id="RHEA:36691"/>
        <dbReference type="ChEBI" id="CHEBI:15378"/>
        <dbReference type="ChEBI" id="CHEBI:57287"/>
        <dbReference type="ChEBI" id="CHEBI:57394"/>
        <dbReference type="ChEBI" id="CHEBI:57756"/>
        <dbReference type="ChEBI" id="CHEBI:72961"/>
    </reaction>
    <physiologicalReaction direction="left-to-right" evidence="9">
        <dbReference type="Rhea" id="RHEA:36692"/>
    </physiologicalReaction>
</comment>
<comment type="catalytic activity">
    <reaction evidence="9">
        <text>eicosanoyl-CoA + sphing-4-enine = N-eicosanoyl-sphing-4-enine + CoA + H(+)</text>
        <dbReference type="Rhea" id="RHEA:45284"/>
        <dbReference type="ChEBI" id="CHEBI:15378"/>
        <dbReference type="ChEBI" id="CHEBI:57287"/>
        <dbReference type="ChEBI" id="CHEBI:57380"/>
        <dbReference type="ChEBI" id="CHEBI:57756"/>
        <dbReference type="ChEBI" id="CHEBI:72962"/>
    </reaction>
    <physiologicalReaction direction="left-to-right" evidence="9">
        <dbReference type="Rhea" id="RHEA:45285"/>
    </physiologicalReaction>
</comment>
<comment type="catalytic activity">
    <reaction evidence="1">
        <text>sphinganine + hexadecanoyl-CoA = N-hexadecanoylsphinganine + CoA + H(+)</text>
        <dbReference type="Rhea" id="RHEA:36539"/>
        <dbReference type="ChEBI" id="CHEBI:15378"/>
        <dbReference type="ChEBI" id="CHEBI:57287"/>
        <dbReference type="ChEBI" id="CHEBI:57379"/>
        <dbReference type="ChEBI" id="CHEBI:57817"/>
        <dbReference type="ChEBI" id="CHEBI:67042"/>
    </reaction>
    <physiologicalReaction direction="left-to-right" evidence="1">
        <dbReference type="Rhea" id="RHEA:36540"/>
    </physiologicalReaction>
</comment>
<comment type="catalytic activity">
    <reaction evidence="7">
        <text>sphinganine + octadecanoyl-CoA = N-(octadecanoyl)-sphinganine + CoA + H(+)</text>
        <dbReference type="Rhea" id="RHEA:36547"/>
        <dbReference type="ChEBI" id="CHEBI:15378"/>
        <dbReference type="ChEBI" id="CHEBI:57287"/>
        <dbReference type="ChEBI" id="CHEBI:57394"/>
        <dbReference type="ChEBI" id="CHEBI:57817"/>
        <dbReference type="ChEBI" id="CHEBI:67033"/>
    </reaction>
    <physiologicalReaction direction="left-to-right" evidence="7">
        <dbReference type="Rhea" id="RHEA:36548"/>
    </physiologicalReaction>
</comment>
<comment type="catalytic activity">
    <reaction evidence="1">
        <text>sphinganine + (9Z)-octadecenoyl-CoA = N-(9Z-octadecenoyl)-sphinganine + CoA + H(+)</text>
        <dbReference type="Rhea" id="RHEA:36575"/>
        <dbReference type="ChEBI" id="CHEBI:15378"/>
        <dbReference type="ChEBI" id="CHEBI:57287"/>
        <dbReference type="ChEBI" id="CHEBI:57387"/>
        <dbReference type="ChEBI" id="CHEBI:57817"/>
        <dbReference type="ChEBI" id="CHEBI:74100"/>
    </reaction>
    <physiologicalReaction direction="left-to-right" evidence="1">
        <dbReference type="Rhea" id="RHEA:36576"/>
    </physiologicalReaction>
</comment>
<comment type="catalytic activity">
    <reaction evidence="6 7">
        <text>eicosanoyl-CoA + sphinganine = N-eicosanoylsphinganine + CoA + H(+)</text>
        <dbReference type="Rhea" id="RHEA:36555"/>
        <dbReference type="ChEBI" id="CHEBI:15378"/>
        <dbReference type="ChEBI" id="CHEBI:57287"/>
        <dbReference type="ChEBI" id="CHEBI:57380"/>
        <dbReference type="ChEBI" id="CHEBI:57817"/>
        <dbReference type="ChEBI" id="CHEBI:67027"/>
    </reaction>
    <physiologicalReaction direction="left-to-right" evidence="6 7">
        <dbReference type="Rhea" id="RHEA:36556"/>
    </physiologicalReaction>
</comment>
<comment type="activity regulation">
    <text evidence="1">Ceramide synthase activity is inhibited by sphingosine-1-phosphate.</text>
</comment>
<comment type="pathway">
    <text evidence="5 6 8 9">Lipid metabolism; sphingolipid metabolism.</text>
</comment>
<comment type="subunit">
    <text evidence="1 11 12">Interacts with ATP6V0C, ASGR1, ASGR2 and SLC22A1/OCT1. Interacts with ELOV1, HSD17B12 and TECR (By similarity). Interacts with NDUFS2 (PubMed:32279995). Interacts with PAQR4; the interaction regulates the stability and activity of CERS2 and is inhibited in presence of ceramides (PubMed:38961186).</text>
</comment>
<comment type="subcellular location">
    <subcellularLocation>
        <location evidence="5">Endoplasmic reticulum membrane</location>
        <topology evidence="2">Multi-pass membrane protein</topology>
    </subcellularLocation>
</comment>
<comment type="tissue specificity">
    <text evidence="5 6 7">Broadly expressed, with highest levels in liver and kidney (PubMed:15823095, PubMed:18165233, PubMed:19801672). In brain is detected in neurons, oligodentrocytes, ependymal cells and epithelial cells of the choroid plexus. In kidney is detected in collecting ducts and to a lesser degree in proximal tubules.</text>
</comment>
<comment type="domain">
    <text evidence="1">The last loop motif confers selectivity toward behenoyl-CoA (docosanoyl-CoA; C22:0-CoA) and lignoceroyl-CoA (tetracosanoyl-CoA; C24:0-CoA) as acyl donors.</text>
</comment>
<comment type="domain">
    <text evidence="17">The predicted Homeobox domain (Homeobox-like region) lacks important residues for DNA-binding. Moreover, the protein localizes to the endoplasmic reticulum membrane, strongly suggesting that it does not constitute a canonical homeobox domain.</text>
</comment>
<comment type="PTM">
    <text evidence="10">Acetylated (PubMed:26620563). Deacetylation by SIRT3 increases enzyme activity and promotes mitochondrial ceramide accumulation (PubMed:26620563).</text>
</comment>
<comment type="PTM">
    <text evidence="1">Phosphorylated at the C-terminus by CK2, leading to increase the ceramide synthase activity.</text>
</comment>
<comment type="disruption phenotype">
    <text evidence="7 8">Most mice do not survive beyond 16 months (PubMed:20110363). Ceramide and downstream sphingolipids are devoid of very long (C22-C24) acyl chains (PubMed:20110363). Total glycerophospholipid and cholesterol levels are unaltered, while a marked increase in C18:1 and C18:2 fatty acids in phosphatidylethanolamine, concomitant with a reduction in C18:0 and C20:4 fatty acids are observed (PubMed:20110363). Membranes display higher membrane fluidity and show morphological changes (PubMed:20110363). Mutant mice show signs of neurodegeneration characterized by the loss of myelin sheath structure stability and formation of numerous small cysts in the cerebellum. They develop hepatocarcinomas between 7 and 9 months of age.</text>
</comment>
<protein>
    <recommendedName>
        <fullName evidence="14">Ceramide synthase 2</fullName>
        <shortName evidence="14">CerS2</shortName>
    </recommendedName>
    <alternativeName>
        <fullName evidence="13">LAG1 longevity assurance homolog 2</fullName>
    </alternativeName>
    <alternativeName>
        <fullName evidence="16">Sphingosine N-acyltransferase CERS2</fullName>
        <ecNumber evidence="9">2.3.1.24</ecNumber>
    </alternativeName>
    <alternativeName>
        <fullName evidence="15">Translocating chain-associating membrane protein homolog 3</fullName>
        <shortName evidence="15">TRAM homolog 3</shortName>
    </alternativeName>
    <alternativeName>
        <fullName evidence="1">Tumor metastasis-suppressor gene 1 protein</fullName>
    </alternativeName>
    <alternativeName>
        <fullName evidence="16">Very-long-chain ceramide synthase CERS2</fullName>
        <ecNumber evidence="5 6 8">2.3.1.297</ecNumber>
    </alternativeName>
</protein>
<gene>
    <name evidence="14 19" type="primary">Cers2</name>
    <name evidence="13" type="synonym">Lass2</name>
    <name evidence="15" type="synonym">Trh3</name>
</gene>
<organism>
    <name type="scientific">Mus musculus</name>
    <name type="common">Mouse</name>
    <dbReference type="NCBI Taxonomy" id="10090"/>
    <lineage>
        <taxon>Eukaryota</taxon>
        <taxon>Metazoa</taxon>
        <taxon>Chordata</taxon>
        <taxon>Craniata</taxon>
        <taxon>Vertebrata</taxon>
        <taxon>Euteleostomi</taxon>
        <taxon>Mammalia</taxon>
        <taxon>Eutheria</taxon>
        <taxon>Euarchontoglires</taxon>
        <taxon>Glires</taxon>
        <taxon>Rodentia</taxon>
        <taxon>Myomorpha</taxon>
        <taxon>Muroidea</taxon>
        <taxon>Muridae</taxon>
        <taxon>Murinae</taxon>
        <taxon>Mus</taxon>
        <taxon>Mus</taxon>
    </lineage>
</organism>
<sequence length="380" mass="45024">MLQTLYDYFWWERLWLPVNLTWADLEDKDGRVYAKASDLYITLPLALLFLVIRYFFELYVATPLAALLNVKEKTRLRAPPNATLEHFYQTSGKQPKQVEVDLLSRQSGLSGRQVERWFRRRRNQDRPSLLKKFREASWRFTYYLIAFVAGMAVTVDKPWFYDLRKVWEGYPIQSIIPSQYWYYMIELSFYWSLLFSIASDVKRKDFKEQIIHHVATIILLCFSWFANYVRAGTLIMALHDASDYLLESAKMFNYAGWKNTCNNLFIVFAIVFIITRLVIMPFWILHCTMIYPLELYPAFFGYYFFNFMMAVLQMLHIFWAYFILRMAHKFITGKLIEDERSDREETESSEGEETAAGAGAKSRLLANGHPILNNNHPKND</sequence>
<name>CERS2_MOUSE</name>
<accession>Q924Z4</accession>
<accession>Q3TXC5</accession>
<accession>Q9DCN6</accession>
<evidence type="ECO:0000250" key="1">
    <source>
        <dbReference type="UniProtKB" id="Q96G23"/>
    </source>
</evidence>
<evidence type="ECO:0000255" key="2"/>
<evidence type="ECO:0000255" key="3">
    <source>
        <dbReference type="PROSITE-ProRule" id="PRU00205"/>
    </source>
</evidence>
<evidence type="ECO:0000256" key="4">
    <source>
        <dbReference type="SAM" id="MobiDB-lite"/>
    </source>
</evidence>
<evidence type="ECO:0000269" key="5">
    <source>
    </source>
</evidence>
<evidence type="ECO:0000269" key="6">
    <source>
    </source>
</evidence>
<evidence type="ECO:0000269" key="7">
    <source>
    </source>
</evidence>
<evidence type="ECO:0000269" key="8">
    <source>
    </source>
</evidence>
<evidence type="ECO:0000269" key="9">
    <source>
    </source>
</evidence>
<evidence type="ECO:0000269" key="10">
    <source>
    </source>
</evidence>
<evidence type="ECO:0000269" key="11">
    <source>
    </source>
</evidence>
<evidence type="ECO:0000269" key="12">
    <source>
    </source>
</evidence>
<evidence type="ECO:0000303" key="13">
    <source>
    </source>
</evidence>
<evidence type="ECO:0000303" key="14">
    <source>
    </source>
</evidence>
<evidence type="ECO:0000303" key="15">
    <source ref="1"/>
</evidence>
<evidence type="ECO:0000305" key="16"/>
<evidence type="ECO:0000305" key="17">
    <source>
    </source>
</evidence>
<evidence type="ECO:0000305" key="18">
    <source>
    </source>
</evidence>
<evidence type="ECO:0000312" key="19">
    <source>
        <dbReference type="MGI" id="MGI:1924143"/>
    </source>
</evidence>
<evidence type="ECO:0007744" key="20">
    <source>
    </source>
</evidence>